<geneLocation type="organellar chromatophore"/>
<dbReference type="EMBL" id="CP000815">
    <property type="protein sequence ID" value="ACB42641.1"/>
    <property type="molecule type" value="Genomic_DNA"/>
</dbReference>
<dbReference type="RefSeq" id="YP_002048851.1">
    <property type="nucleotide sequence ID" value="NC_011087.1"/>
</dbReference>
<dbReference type="SMR" id="B1X3X2"/>
<dbReference type="GeneID" id="6481609"/>
<dbReference type="GO" id="GO:0070118">
    <property type="term" value="C:organellar chromatophore thylakoid membrane"/>
    <property type="evidence" value="ECO:0007669"/>
    <property type="project" value="UniProtKB-SubCell"/>
</dbReference>
<dbReference type="GO" id="GO:0009536">
    <property type="term" value="C:plastid"/>
    <property type="evidence" value="ECO:0007669"/>
    <property type="project" value="UniProtKB-KW"/>
</dbReference>
<dbReference type="GO" id="GO:0017004">
    <property type="term" value="P:cytochrome complex assembly"/>
    <property type="evidence" value="ECO:0007669"/>
    <property type="project" value="UniProtKB-UniRule"/>
</dbReference>
<dbReference type="HAMAP" id="MF_01392">
    <property type="entry name" value="CytC_Ccs1"/>
    <property type="match status" value="1"/>
</dbReference>
<dbReference type="InterPro" id="IPR023494">
    <property type="entry name" value="Cyt_c_bgen_Ccs1/CcsB/ResB"/>
</dbReference>
<dbReference type="InterPro" id="IPR007816">
    <property type="entry name" value="ResB-like_domain"/>
</dbReference>
<dbReference type="PANTHER" id="PTHR31566">
    <property type="entry name" value="CYTOCHROME C BIOGENESIS PROTEIN CCS1, CHLOROPLASTIC"/>
    <property type="match status" value="1"/>
</dbReference>
<dbReference type="PANTHER" id="PTHR31566:SF0">
    <property type="entry name" value="CYTOCHROME C BIOGENESIS PROTEIN CCS1, CHLOROPLASTIC"/>
    <property type="match status" value="1"/>
</dbReference>
<dbReference type="Pfam" id="PF05140">
    <property type="entry name" value="ResB"/>
    <property type="match status" value="2"/>
</dbReference>
<sequence>MKHVLKWISDLRVAIFLLLIIALSSSLGTALPQKESAESYYEAYNSSPWLKVFSGESIIQLQLDHVYSSDWFLSLLLWLGIALVFCSWRRQLPALQFTLRWIDYCNPRQLSKLALAETIISTDASASIKRLEQLLKNQGWQVQAKSGRLAARRGIAGRVGPLMVHTGLVILMLGAVWGVLGGHRLERFLAPGREMELLNSHGKSQLNIALESFQIERDPVGRPEQYRSQLRLRELGNSRENNSGSIDKSLNREISVNHPLRYGGMTVYQADWALAAITVQLGRSPLLQLPLEQFPQLGEQVWGVVLPTQQDGSNPVLLALSSEKGPIEVFASDGSLITTLRPGGVAATINDVKVRVESILPASGLLLKRDPGVPLVYIGFAVALMGGGLSLISTRQIWAIAELEQQRFHVGGLCNREFTNFAQELPQFISEIQQI</sequence>
<protein>
    <recommendedName>
        <fullName evidence="2">Cytochrome c biogenesis protein CcsB</fullName>
    </recommendedName>
</protein>
<comment type="function">
    <text evidence="2">Required during biogenesis of c-type cytochromes (cytochrome c6 and cytochrome f) at the step of heme attachment.</text>
</comment>
<comment type="subunit">
    <text evidence="2">May interact with CcsA.</text>
</comment>
<comment type="subcellular location">
    <subcellularLocation>
        <location evidence="1">Plastid</location>
        <location evidence="1">Organellar chromatophore thylakoid membrane</location>
        <topology evidence="2">Multi-pass membrane protein</topology>
    </subcellularLocation>
</comment>
<comment type="similarity">
    <text evidence="2">Belongs to the Ccs1/CcsB family.</text>
</comment>
<evidence type="ECO:0000250" key="1"/>
<evidence type="ECO:0000255" key="2">
    <source>
        <dbReference type="HAMAP-Rule" id="MF_01392"/>
    </source>
</evidence>
<organism>
    <name type="scientific">Paulinella chromatophora</name>
    <dbReference type="NCBI Taxonomy" id="39717"/>
    <lineage>
        <taxon>Eukaryota</taxon>
        <taxon>Sar</taxon>
        <taxon>Rhizaria</taxon>
        <taxon>Cercozoa</taxon>
        <taxon>Imbricatea</taxon>
        <taxon>Silicofilosea</taxon>
        <taxon>Euglyphida</taxon>
        <taxon>Paulinellidae</taxon>
        <taxon>Paulinella</taxon>
    </lineage>
</organism>
<reference key="1">
    <citation type="journal article" date="2008" name="Curr. Biol.">
        <title>Chromatophore genome sequence of Paulinella sheds light on acquisition of photosynthesis by eukaryotes.</title>
        <authorList>
            <person name="Nowack E.C.M."/>
            <person name="Melkonian M."/>
            <person name="Gloeckner G."/>
        </authorList>
    </citation>
    <scope>NUCLEOTIDE SEQUENCE [LARGE SCALE GENOMIC DNA]</scope>
</reference>
<gene>
    <name evidence="2" type="primary">ccsB</name>
    <name evidence="2" type="synonym">ccs1</name>
    <name type="ordered locus">PCC_0191</name>
</gene>
<accession>B1X3X2</accession>
<feature type="chain" id="PRO_0000363640" description="Cytochrome c biogenesis protein CcsB">
    <location>
        <begin position="1"/>
        <end position="435"/>
    </location>
</feature>
<feature type="transmembrane region" description="Helical" evidence="2">
    <location>
        <begin position="11"/>
        <end position="31"/>
    </location>
</feature>
<feature type="transmembrane region" description="Helical" evidence="2">
    <location>
        <begin position="69"/>
        <end position="89"/>
    </location>
</feature>
<feature type="transmembrane region" description="Helical" evidence="2">
    <location>
        <begin position="159"/>
        <end position="179"/>
    </location>
</feature>
<keyword id="KW-0201">Cytochrome c-type biogenesis</keyword>
<keyword id="KW-0472">Membrane</keyword>
<keyword id="KW-0994">Organellar chromatophore</keyword>
<keyword id="KW-0934">Plastid</keyword>
<keyword id="KW-0793">Thylakoid</keyword>
<keyword id="KW-0812">Transmembrane</keyword>
<keyword id="KW-1133">Transmembrane helix</keyword>
<proteinExistence type="inferred from homology"/>
<name>CCS1_PAUCH</name>